<reference key="1">
    <citation type="journal article" date="2002" name="Nature">
        <title>Comparison of the genomes of two Xanthomonas pathogens with differing host specificities.</title>
        <authorList>
            <person name="da Silva A.C.R."/>
            <person name="Ferro J.A."/>
            <person name="Reinach F.C."/>
            <person name="Farah C.S."/>
            <person name="Furlan L.R."/>
            <person name="Quaggio R.B."/>
            <person name="Monteiro-Vitorello C.B."/>
            <person name="Van Sluys M.A."/>
            <person name="Almeida N.F. Jr."/>
            <person name="Alves L.M.C."/>
            <person name="do Amaral A.M."/>
            <person name="Bertolini M.C."/>
            <person name="Camargo L.E.A."/>
            <person name="Camarotte G."/>
            <person name="Cannavan F."/>
            <person name="Cardozo J."/>
            <person name="Chambergo F."/>
            <person name="Ciapina L.P."/>
            <person name="Cicarelli R.M.B."/>
            <person name="Coutinho L.L."/>
            <person name="Cursino-Santos J.R."/>
            <person name="El-Dorry H."/>
            <person name="Faria J.B."/>
            <person name="Ferreira A.J.S."/>
            <person name="Ferreira R.C.C."/>
            <person name="Ferro M.I.T."/>
            <person name="Formighieri E.F."/>
            <person name="Franco M.C."/>
            <person name="Greggio C.C."/>
            <person name="Gruber A."/>
            <person name="Katsuyama A.M."/>
            <person name="Kishi L.T."/>
            <person name="Leite R.P."/>
            <person name="Lemos E.G.M."/>
            <person name="Lemos M.V.F."/>
            <person name="Locali E.C."/>
            <person name="Machado M.A."/>
            <person name="Madeira A.M.B.N."/>
            <person name="Martinez-Rossi N.M."/>
            <person name="Martins E.C."/>
            <person name="Meidanis J."/>
            <person name="Menck C.F.M."/>
            <person name="Miyaki C.Y."/>
            <person name="Moon D.H."/>
            <person name="Moreira L.M."/>
            <person name="Novo M.T.M."/>
            <person name="Okura V.K."/>
            <person name="Oliveira M.C."/>
            <person name="Oliveira V.R."/>
            <person name="Pereira H.A."/>
            <person name="Rossi A."/>
            <person name="Sena J.A.D."/>
            <person name="Silva C."/>
            <person name="de Souza R.F."/>
            <person name="Spinola L.A.F."/>
            <person name="Takita M.A."/>
            <person name="Tamura R.E."/>
            <person name="Teixeira E.C."/>
            <person name="Tezza R.I.D."/>
            <person name="Trindade dos Santos M."/>
            <person name="Truffi D."/>
            <person name="Tsai S.M."/>
            <person name="White F.F."/>
            <person name="Setubal J.C."/>
            <person name="Kitajima J.P."/>
        </authorList>
    </citation>
    <scope>NUCLEOTIDE SEQUENCE [LARGE SCALE GENOMIC DNA]</scope>
    <source>
        <strain>ATCC 33913 / DSM 3586 / NCPPB 528 / LMG 568 / P 25</strain>
    </source>
</reference>
<keyword id="KW-0067">ATP-binding</keyword>
<keyword id="KW-0418">Kinase</keyword>
<keyword id="KW-0545">Nucleotide biosynthesis</keyword>
<keyword id="KW-0547">Nucleotide-binding</keyword>
<keyword id="KW-1185">Reference proteome</keyword>
<keyword id="KW-0808">Transferase</keyword>
<proteinExistence type="inferred from homology"/>
<protein>
    <recommendedName>
        <fullName evidence="1">Thymidylate kinase</fullName>
        <ecNumber evidence="1">2.7.4.9</ecNumber>
    </recommendedName>
    <alternativeName>
        <fullName evidence="1">dTMP kinase</fullName>
    </alternativeName>
</protein>
<accession>Q8P3Y6</accession>
<name>KTHY_XANCP</name>
<evidence type="ECO:0000255" key="1">
    <source>
        <dbReference type="HAMAP-Rule" id="MF_00165"/>
    </source>
</evidence>
<dbReference type="EC" id="2.7.4.9" evidence="1"/>
<dbReference type="EMBL" id="AE008922">
    <property type="protein sequence ID" value="AAM43153.1"/>
    <property type="molecule type" value="Genomic_DNA"/>
</dbReference>
<dbReference type="RefSeq" id="NP_639271.1">
    <property type="nucleotide sequence ID" value="NC_003902.1"/>
</dbReference>
<dbReference type="RefSeq" id="WP_011039005.1">
    <property type="nucleotide sequence ID" value="NC_003902.1"/>
</dbReference>
<dbReference type="SMR" id="Q8P3Y6"/>
<dbReference type="STRING" id="190485.XCC3931"/>
<dbReference type="EnsemblBacteria" id="AAM43153">
    <property type="protein sequence ID" value="AAM43153"/>
    <property type="gene ID" value="XCC3931"/>
</dbReference>
<dbReference type="KEGG" id="xcc:XCC3931"/>
<dbReference type="PATRIC" id="fig|190485.4.peg.4207"/>
<dbReference type="eggNOG" id="COG0125">
    <property type="taxonomic scope" value="Bacteria"/>
</dbReference>
<dbReference type="HOGENOM" id="CLU_049131_0_2_6"/>
<dbReference type="OrthoDB" id="9774907at2"/>
<dbReference type="Proteomes" id="UP000001010">
    <property type="component" value="Chromosome"/>
</dbReference>
<dbReference type="GO" id="GO:0005737">
    <property type="term" value="C:cytoplasm"/>
    <property type="evidence" value="ECO:0000318"/>
    <property type="project" value="GO_Central"/>
</dbReference>
<dbReference type="GO" id="GO:0005829">
    <property type="term" value="C:cytosol"/>
    <property type="evidence" value="ECO:0000318"/>
    <property type="project" value="GO_Central"/>
</dbReference>
<dbReference type="GO" id="GO:0005524">
    <property type="term" value="F:ATP binding"/>
    <property type="evidence" value="ECO:0007669"/>
    <property type="project" value="UniProtKB-UniRule"/>
</dbReference>
<dbReference type="GO" id="GO:0004798">
    <property type="term" value="F:dTMP kinase activity"/>
    <property type="evidence" value="ECO:0000318"/>
    <property type="project" value="GO_Central"/>
</dbReference>
<dbReference type="GO" id="GO:0006233">
    <property type="term" value="P:dTDP biosynthetic process"/>
    <property type="evidence" value="ECO:0000318"/>
    <property type="project" value="GO_Central"/>
</dbReference>
<dbReference type="GO" id="GO:0006235">
    <property type="term" value="P:dTTP biosynthetic process"/>
    <property type="evidence" value="ECO:0000318"/>
    <property type="project" value="GO_Central"/>
</dbReference>
<dbReference type="GO" id="GO:0006227">
    <property type="term" value="P:dUDP biosynthetic process"/>
    <property type="evidence" value="ECO:0000318"/>
    <property type="project" value="GO_Central"/>
</dbReference>
<dbReference type="CDD" id="cd01672">
    <property type="entry name" value="TMPK"/>
    <property type="match status" value="1"/>
</dbReference>
<dbReference type="Gene3D" id="3.40.50.300">
    <property type="entry name" value="P-loop containing nucleotide triphosphate hydrolases"/>
    <property type="match status" value="1"/>
</dbReference>
<dbReference type="HAMAP" id="MF_00165">
    <property type="entry name" value="Thymidylate_kinase"/>
    <property type="match status" value="1"/>
</dbReference>
<dbReference type="InterPro" id="IPR027417">
    <property type="entry name" value="P-loop_NTPase"/>
</dbReference>
<dbReference type="InterPro" id="IPR039430">
    <property type="entry name" value="Thymidylate_kin-like_dom"/>
</dbReference>
<dbReference type="InterPro" id="IPR018094">
    <property type="entry name" value="Thymidylate_kinase"/>
</dbReference>
<dbReference type="NCBIfam" id="TIGR00041">
    <property type="entry name" value="DTMP_kinase"/>
    <property type="match status" value="1"/>
</dbReference>
<dbReference type="PANTHER" id="PTHR10344">
    <property type="entry name" value="THYMIDYLATE KINASE"/>
    <property type="match status" value="1"/>
</dbReference>
<dbReference type="PANTHER" id="PTHR10344:SF4">
    <property type="entry name" value="UMP-CMP KINASE 2, MITOCHONDRIAL"/>
    <property type="match status" value="1"/>
</dbReference>
<dbReference type="Pfam" id="PF02223">
    <property type="entry name" value="Thymidylate_kin"/>
    <property type="match status" value="1"/>
</dbReference>
<dbReference type="SUPFAM" id="SSF52540">
    <property type="entry name" value="P-loop containing nucleoside triphosphate hydrolases"/>
    <property type="match status" value="1"/>
</dbReference>
<sequence>MTIELTPGGLLIAIEGIDGAGKTTLARSLATLLEQAGARVVLSKEPTNGPWGTQLRQSAATGRLSAQDEVDLLLRDRREHVEALIAPALARGEIVILDRYFPSMVAYQGAAGLPLDALLAANDFAPRPDLLLLLDLPPPTGLARIRARGDAPNHFETQDNLERCRAIFAALQLPGKHVIDASADADSVLRQAHAVVVAALADRLRVGATHTDAEKAALELLSAGRPA</sequence>
<gene>
    <name evidence="1" type="primary">tmk</name>
    <name type="ordered locus">XCC3931</name>
</gene>
<comment type="function">
    <text evidence="1">Phosphorylation of dTMP to form dTDP in both de novo and salvage pathways of dTTP synthesis.</text>
</comment>
<comment type="catalytic activity">
    <reaction evidence="1">
        <text>dTMP + ATP = dTDP + ADP</text>
        <dbReference type="Rhea" id="RHEA:13517"/>
        <dbReference type="ChEBI" id="CHEBI:30616"/>
        <dbReference type="ChEBI" id="CHEBI:58369"/>
        <dbReference type="ChEBI" id="CHEBI:63528"/>
        <dbReference type="ChEBI" id="CHEBI:456216"/>
        <dbReference type="EC" id="2.7.4.9"/>
    </reaction>
</comment>
<comment type="similarity">
    <text evidence="1">Belongs to the thymidylate kinase family.</text>
</comment>
<organism>
    <name type="scientific">Xanthomonas campestris pv. campestris (strain ATCC 33913 / DSM 3586 / NCPPB 528 / LMG 568 / P 25)</name>
    <dbReference type="NCBI Taxonomy" id="190485"/>
    <lineage>
        <taxon>Bacteria</taxon>
        <taxon>Pseudomonadati</taxon>
        <taxon>Pseudomonadota</taxon>
        <taxon>Gammaproteobacteria</taxon>
        <taxon>Lysobacterales</taxon>
        <taxon>Lysobacteraceae</taxon>
        <taxon>Xanthomonas</taxon>
    </lineage>
</organism>
<feature type="chain" id="PRO_0000155375" description="Thymidylate kinase">
    <location>
        <begin position="1"/>
        <end position="227"/>
    </location>
</feature>
<feature type="binding site" evidence="1">
    <location>
        <begin position="16"/>
        <end position="23"/>
    </location>
    <ligand>
        <name>ATP</name>
        <dbReference type="ChEBI" id="CHEBI:30616"/>
    </ligand>
</feature>